<comment type="function">
    <text evidence="2 3 4">Subunit b, of the mitochondrial membrane ATP synthase complex (F(1)F(0) ATP synthase or Complex V) that produces ATP from ADP in the presence of a proton gradient across the membrane which is generated by electron transport complexes of the respiratory chain. ATP synthase complex consist of a soluble F(1) head domain - the catalytic core - and a membrane F(1) domain - the membrane proton channel. These two domains are linked by a central stalk rotating inside the F(1) region and a stationary peripheral stalk. During catalysis, ATP synthesis in the catalytic domain of F(1) is coupled via a rotary mechanism of the central stalk subunits to proton translocation (By similarity). In vivo, can only synthesize ATP although its ATP hydrolase activity can be activated artificially in vitro (By similarity). Part of the complex F(0) domain (By similarity). Part of the complex F(0) domain and the peripheric stalk, which acts as a stator to hold the catalytic alpha(3)beta(3) subcomplex and subunit a/ATP6 static relative to the rotary elements (By similarity).</text>
</comment>
<comment type="subunit">
    <text evidence="4">Component of the ATP synthase complex composed at least of ATP5F1A/subunit alpha, ATP5F1B/subunit beta, ATP5MC1/subunit c (homooctomer), MT-ATP6/subunit a, MT-ATP8/subunit 8, ATP5ME/subunit e, ATP5MF/subunit f, ATP5MG/subunit g, ATP5MK/subunit k, ATP5MJ/subunit j, ATP5F1C/subunit gamma, ATP5F1D/subunit delta, ATP5F1E/subunit epsilon, ATP5PF/subunit F6, ATP5PB/subunit b, ATP5PD/subunit d, ATP5PO/subunit OSCP. ATP synthase complex consists of a soluble F(1) head domain (subunits alpha(3) and beta(3)) - the catalytic core - and a membrane F(0) domain - the membrane proton channel (subunits c, a, 8, e, f, g, k and j). These two domains are linked by a central stalk (subunits gamma, delta, and epsilon) rotating inside the F1 region and a stationary peripheral stalk (subunits F6, b, d, and OSCP).</text>
</comment>
<comment type="subcellular location">
    <subcellularLocation>
        <location>Mitochondrion</location>
    </subcellularLocation>
    <subcellularLocation>
        <location>Mitochondrion inner membrane</location>
    </subcellularLocation>
</comment>
<comment type="similarity">
    <text evidence="5">Belongs to the eukaryotic ATPase B chain family.</text>
</comment>
<sequence>MLSRVVLSAAATAAPCLKNAAALGPGVLQATRAFHTGQPRLAPLPPLPEYGGKVRLGLIPEEFFQFLYPKTGVTGPYVLGTGLSLYFLSKEIYVITPETFSTISVVGLIVYVIKKYGASFGEFIDKLNEEKIAQLEEVKQSSMKQIQDAIDMEKAQQALVQKRHYLFDVQRNNIALALEVTYRERLHKAYKEVKNRLDYHISVQNMMRRKEEEHMIDWVEKHVVKSISVQQEKETIAKCIEDLKLLAKKAQAQPIM</sequence>
<keyword id="KW-0007">Acetylation</keyword>
<keyword id="KW-0138">CF(0)</keyword>
<keyword id="KW-0903">Direct protein sequencing</keyword>
<keyword id="KW-0375">Hydrogen ion transport</keyword>
<keyword id="KW-0406">Ion transport</keyword>
<keyword id="KW-0472">Membrane</keyword>
<keyword id="KW-0496">Mitochondrion</keyword>
<keyword id="KW-0999">Mitochondrion inner membrane</keyword>
<keyword id="KW-1185">Reference proteome</keyword>
<keyword id="KW-0809">Transit peptide</keyword>
<keyword id="KW-0813">Transport</keyword>
<organism>
    <name type="scientific">Mus musculus</name>
    <name type="common">Mouse</name>
    <dbReference type="NCBI Taxonomy" id="10090"/>
    <lineage>
        <taxon>Eukaryota</taxon>
        <taxon>Metazoa</taxon>
        <taxon>Chordata</taxon>
        <taxon>Craniata</taxon>
        <taxon>Vertebrata</taxon>
        <taxon>Euteleostomi</taxon>
        <taxon>Mammalia</taxon>
        <taxon>Eutheria</taxon>
        <taxon>Euarchontoglires</taxon>
        <taxon>Glires</taxon>
        <taxon>Rodentia</taxon>
        <taxon>Myomorpha</taxon>
        <taxon>Muroidea</taxon>
        <taxon>Muridae</taxon>
        <taxon>Murinae</taxon>
        <taxon>Mus</taxon>
        <taxon>Mus</taxon>
    </lineage>
</organism>
<reference key="1">
    <citation type="journal article" date="2005" name="Science">
        <title>The transcriptional landscape of the mammalian genome.</title>
        <authorList>
            <person name="Carninci P."/>
            <person name="Kasukawa T."/>
            <person name="Katayama S."/>
            <person name="Gough J."/>
            <person name="Frith M.C."/>
            <person name="Maeda N."/>
            <person name="Oyama R."/>
            <person name="Ravasi T."/>
            <person name="Lenhard B."/>
            <person name="Wells C."/>
            <person name="Kodzius R."/>
            <person name="Shimokawa K."/>
            <person name="Bajic V.B."/>
            <person name="Brenner S.E."/>
            <person name="Batalov S."/>
            <person name="Forrest A.R."/>
            <person name="Zavolan M."/>
            <person name="Davis M.J."/>
            <person name="Wilming L.G."/>
            <person name="Aidinis V."/>
            <person name="Allen J.E."/>
            <person name="Ambesi-Impiombato A."/>
            <person name="Apweiler R."/>
            <person name="Aturaliya R.N."/>
            <person name="Bailey T.L."/>
            <person name="Bansal M."/>
            <person name="Baxter L."/>
            <person name="Beisel K.W."/>
            <person name="Bersano T."/>
            <person name="Bono H."/>
            <person name="Chalk A.M."/>
            <person name="Chiu K.P."/>
            <person name="Choudhary V."/>
            <person name="Christoffels A."/>
            <person name="Clutterbuck D.R."/>
            <person name="Crowe M.L."/>
            <person name="Dalla E."/>
            <person name="Dalrymple B.P."/>
            <person name="de Bono B."/>
            <person name="Della Gatta G."/>
            <person name="di Bernardo D."/>
            <person name="Down T."/>
            <person name="Engstrom P."/>
            <person name="Fagiolini M."/>
            <person name="Faulkner G."/>
            <person name="Fletcher C.F."/>
            <person name="Fukushima T."/>
            <person name="Furuno M."/>
            <person name="Futaki S."/>
            <person name="Gariboldi M."/>
            <person name="Georgii-Hemming P."/>
            <person name="Gingeras T.R."/>
            <person name="Gojobori T."/>
            <person name="Green R.E."/>
            <person name="Gustincich S."/>
            <person name="Harbers M."/>
            <person name="Hayashi Y."/>
            <person name="Hensch T.K."/>
            <person name="Hirokawa N."/>
            <person name="Hill D."/>
            <person name="Huminiecki L."/>
            <person name="Iacono M."/>
            <person name="Ikeo K."/>
            <person name="Iwama A."/>
            <person name="Ishikawa T."/>
            <person name="Jakt M."/>
            <person name="Kanapin A."/>
            <person name="Katoh M."/>
            <person name="Kawasawa Y."/>
            <person name="Kelso J."/>
            <person name="Kitamura H."/>
            <person name="Kitano H."/>
            <person name="Kollias G."/>
            <person name="Krishnan S.P."/>
            <person name="Kruger A."/>
            <person name="Kummerfeld S.K."/>
            <person name="Kurochkin I.V."/>
            <person name="Lareau L.F."/>
            <person name="Lazarevic D."/>
            <person name="Lipovich L."/>
            <person name="Liu J."/>
            <person name="Liuni S."/>
            <person name="McWilliam S."/>
            <person name="Madan Babu M."/>
            <person name="Madera M."/>
            <person name="Marchionni L."/>
            <person name="Matsuda H."/>
            <person name="Matsuzawa S."/>
            <person name="Miki H."/>
            <person name="Mignone F."/>
            <person name="Miyake S."/>
            <person name="Morris K."/>
            <person name="Mottagui-Tabar S."/>
            <person name="Mulder N."/>
            <person name="Nakano N."/>
            <person name="Nakauchi H."/>
            <person name="Ng P."/>
            <person name="Nilsson R."/>
            <person name="Nishiguchi S."/>
            <person name="Nishikawa S."/>
            <person name="Nori F."/>
            <person name="Ohara O."/>
            <person name="Okazaki Y."/>
            <person name="Orlando V."/>
            <person name="Pang K.C."/>
            <person name="Pavan W.J."/>
            <person name="Pavesi G."/>
            <person name="Pesole G."/>
            <person name="Petrovsky N."/>
            <person name="Piazza S."/>
            <person name="Reed J."/>
            <person name="Reid J.F."/>
            <person name="Ring B.Z."/>
            <person name="Ringwald M."/>
            <person name="Rost B."/>
            <person name="Ruan Y."/>
            <person name="Salzberg S.L."/>
            <person name="Sandelin A."/>
            <person name="Schneider C."/>
            <person name="Schoenbach C."/>
            <person name="Sekiguchi K."/>
            <person name="Semple C.A."/>
            <person name="Seno S."/>
            <person name="Sessa L."/>
            <person name="Sheng Y."/>
            <person name="Shibata Y."/>
            <person name="Shimada H."/>
            <person name="Shimada K."/>
            <person name="Silva D."/>
            <person name="Sinclair B."/>
            <person name="Sperling S."/>
            <person name="Stupka E."/>
            <person name="Sugiura K."/>
            <person name="Sultana R."/>
            <person name="Takenaka Y."/>
            <person name="Taki K."/>
            <person name="Tammoja K."/>
            <person name="Tan S.L."/>
            <person name="Tang S."/>
            <person name="Taylor M.S."/>
            <person name="Tegner J."/>
            <person name="Teichmann S.A."/>
            <person name="Ueda H.R."/>
            <person name="van Nimwegen E."/>
            <person name="Verardo R."/>
            <person name="Wei C.L."/>
            <person name="Yagi K."/>
            <person name="Yamanishi H."/>
            <person name="Zabarovsky E."/>
            <person name="Zhu S."/>
            <person name="Zimmer A."/>
            <person name="Hide W."/>
            <person name="Bult C."/>
            <person name="Grimmond S.M."/>
            <person name="Teasdale R.D."/>
            <person name="Liu E.T."/>
            <person name="Brusic V."/>
            <person name="Quackenbush J."/>
            <person name="Wahlestedt C."/>
            <person name="Mattick J.S."/>
            <person name="Hume D.A."/>
            <person name="Kai C."/>
            <person name="Sasaki D."/>
            <person name="Tomaru Y."/>
            <person name="Fukuda S."/>
            <person name="Kanamori-Katayama M."/>
            <person name="Suzuki M."/>
            <person name="Aoki J."/>
            <person name="Arakawa T."/>
            <person name="Iida J."/>
            <person name="Imamura K."/>
            <person name="Itoh M."/>
            <person name="Kato T."/>
            <person name="Kawaji H."/>
            <person name="Kawagashira N."/>
            <person name="Kawashima T."/>
            <person name="Kojima M."/>
            <person name="Kondo S."/>
            <person name="Konno H."/>
            <person name="Nakano K."/>
            <person name="Ninomiya N."/>
            <person name="Nishio T."/>
            <person name="Okada M."/>
            <person name="Plessy C."/>
            <person name="Shibata K."/>
            <person name="Shiraki T."/>
            <person name="Suzuki S."/>
            <person name="Tagami M."/>
            <person name="Waki K."/>
            <person name="Watahiki A."/>
            <person name="Okamura-Oho Y."/>
            <person name="Suzuki H."/>
            <person name="Kawai J."/>
            <person name="Hayashizaki Y."/>
        </authorList>
    </citation>
    <scope>NUCLEOTIDE SEQUENCE [LARGE SCALE MRNA]</scope>
    <source>
        <strain>C57BL/6J</strain>
        <tissue>Brain</tissue>
        <tissue>Embryo</tissue>
    </source>
</reference>
<reference key="2">
    <citation type="submission" date="2007-04" db="UniProtKB">
        <authorList>
            <person name="Lubec G."/>
            <person name="Kang S.U."/>
        </authorList>
    </citation>
    <scope>PROTEIN SEQUENCE OF 71-90; 115-139; 145-154; 164-183 AND 195-221</scope>
    <scope>IDENTIFICATION BY MASS SPECTROMETRY</scope>
    <source>
        <strain>C57BL/6J</strain>
        <tissue>Brain</tissue>
    </source>
</reference>
<reference key="3">
    <citation type="journal article" date="2010" name="Cell">
        <title>A tissue-specific atlas of mouse protein phosphorylation and expression.</title>
        <authorList>
            <person name="Huttlin E.L."/>
            <person name="Jedrychowski M.P."/>
            <person name="Elias J.E."/>
            <person name="Goswami T."/>
            <person name="Rad R."/>
            <person name="Beausoleil S.A."/>
            <person name="Villen J."/>
            <person name="Haas W."/>
            <person name="Sowa M.E."/>
            <person name="Gygi S.P."/>
        </authorList>
    </citation>
    <scope>IDENTIFICATION BY MASS SPECTROMETRY [LARGE SCALE ANALYSIS]</scope>
    <source>
        <tissue>Brain</tissue>
        <tissue>Brown adipose tissue</tissue>
        <tissue>Heart</tissue>
        <tissue>Kidney</tissue>
        <tissue>Liver</tissue>
        <tissue>Lung</tissue>
        <tissue>Pancreas</tissue>
        <tissue>Spleen</tissue>
        <tissue>Testis</tissue>
    </source>
</reference>
<reference key="4">
    <citation type="journal article" date="2013" name="Mol. Cell">
        <title>SIRT5-mediated lysine desuccinylation impacts diverse metabolic pathways.</title>
        <authorList>
            <person name="Park J."/>
            <person name="Chen Y."/>
            <person name="Tishkoff D.X."/>
            <person name="Peng C."/>
            <person name="Tan M."/>
            <person name="Dai L."/>
            <person name="Xie Z."/>
            <person name="Zhang Y."/>
            <person name="Zwaans B.M."/>
            <person name="Skinner M.E."/>
            <person name="Lombard D.B."/>
            <person name="Zhao Y."/>
        </authorList>
    </citation>
    <scope>SUCCINYLATION [LARGE SCALE ANALYSIS] AT LYS-131</scope>
    <scope>IDENTIFICATION BY MASS SPECTROMETRY [LARGE SCALE ANALYSIS]</scope>
    <source>
        <tissue>Liver</tissue>
    </source>
</reference>
<reference key="5">
    <citation type="journal article" date="2013" name="Proc. Natl. Acad. Sci. U.S.A.">
        <title>Label-free quantitative proteomics of the lysine acetylome in mitochondria identifies substrates of SIRT3 in metabolic pathways.</title>
        <authorList>
            <person name="Rardin M.J."/>
            <person name="Newman J.C."/>
            <person name="Held J.M."/>
            <person name="Cusack M.P."/>
            <person name="Sorensen D.J."/>
            <person name="Li B."/>
            <person name="Schilling B."/>
            <person name="Mooney S.D."/>
            <person name="Kahn C.R."/>
            <person name="Verdin E."/>
            <person name="Gibson B.W."/>
        </authorList>
    </citation>
    <scope>ACETYLATION [LARGE SCALE ANALYSIS] AT LYS-139; LYS-154; LYS-162; LYS-221; LYS-225; LYS-233 AND LYS-244</scope>
    <scope>IDENTIFICATION BY MASS SPECTROMETRY [LARGE SCALE ANALYSIS]</scope>
    <source>
        <tissue>Liver</tissue>
    </source>
</reference>
<gene>
    <name evidence="4" type="primary">Atp5pb</name>
    <name type="synonym">Atp5f1</name>
</gene>
<evidence type="ECO:0000250" key="1"/>
<evidence type="ECO:0000250" key="2">
    <source>
        <dbReference type="UniProtKB" id="P13619"/>
    </source>
</evidence>
<evidence type="ECO:0000250" key="3">
    <source>
        <dbReference type="UniProtKB" id="P19483"/>
    </source>
</evidence>
<evidence type="ECO:0000250" key="4">
    <source>
        <dbReference type="UniProtKB" id="P24539"/>
    </source>
</evidence>
<evidence type="ECO:0000305" key="5"/>
<evidence type="ECO:0007744" key="6">
    <source>
    </source>
</evidence>
<evidence type="ECO:0007744" key="7">
    <source>
    </source>
</evidence>
<feature type="transit peptide" description="Mitochondrion" evidence="1">
    <location>
        <begin position="1"/>
        <end position="42"/>
    </location>
</feature>
<feature type="chain" id="PRO_0000002514" description="ATP synthase peripheral stalk subunit b, mitochondrial">
    <location>
        <begin position="43"/>
        <end position="256"/>
    </location>
</feature>
<feature type="modified residue" description="N6-succinyllysine" evidence="7">
    <location>
        <position position="131"/>
    </location>
</feature>
<feature type="modified residue" description="N6-acetyllysine" evidence="6">
    <location>
        <position position="139"/>
    </location>
</feature>
<feature type="modified residue" description="N6-acetyllysine" evidence="6">
    <location>
        <position position="154"/>
    </location>
</feature>
<feature type="modified residue" description="N6-acetyllysine" evidence="6">
    <location>
        <position position="162"/>
    </location>
</feature>
<feature type="modified residue" description="N6-acetyllysine" evidence="6">
    <location>
        <position position="221"/>
    </location>
</feature>
<feature type="modified residue" description="N6-acetyllysine" evidence="6">
    <location>
        <position position="225"/>
    </location>
</feature>
<feature type="modified residue" description="N6-acetyllysine" evidence="6">
    <location>
        <position position="233"/>
    </location>
</feature>
<feature type="modified residue" description="N6-acetyllysine" evidence="6">
    <location>
        <position position="244"/>
    </location>
</feature>
<name>AT5F1_MOUSE</name>
<protein>
    <recommendedName>
        <fullName evidence="5">ATP synthase peripheral stalk subunit b, mitochondrial</fullName>
    </recommendedName>
    <alternativeName>
        <fullName evidence="5">ATP synthase F(0) complex subunit B1, mitochondrial</fullName>
    </alternativeName>
    <alternativeName>
        <fullName evidence="5">ATP synthase peripheral stalk-membrane subunit b</fullName>
    </alternativeName>
    <alternativeName>
        <fullName>ATP synthase subunit b</fullName>
        <shortName>ATPase subunit b</shortName>
    </alternativeName>
</protein>
<accession>Q9CQQ7</accession>
<dbReference type="EMBL" id="AK002960">
    <property type="protein sequence ID" value="BAB22481.1"/>
    <property type="molecule type" value="mRNA"/>
</dbReference>
<dbReference type="EMBL" id="AK011312">
    <property type="protein sequence ID" value="BAB27538.1"/>
    <property type="molecule type" value="mRNA"/>
</dbReference>
<dbReference type="CCDS" id="CCDS17714.1"/>
<dbReference type="RefSeq" id="NP_033855.2">
    <property type="nucleotide sequence ID" value="NM_009725.5"/>
</dbReference>
<dbReference type="SMR" id="Q9CQQ7"/>
<dbReference type="BioGRID" id="198256">
    <property type="interactions" value="93"/>
</dbReference>
<dbReference type="FunCoup" id="Q9CQQ7">
    <property type="interactions" value="1672"/>
</dbReference>
<dbReference type="IntAct" id="Q9CQQ7">
    <property type="interactions" value="5"/>
</dbReference>
<dbReference type="STRING" id="10090.ENSMUSP00000113022"/>
<dbReference type="GlyGen" id="Q9CQQ7">
    <property type="glycosylation" value="1 site, 1 O-linked glycan (1 site)"/>
</dbReference>
<dbReference type="iPTMnet" id="Q9CQQ7"/>
<dbReference type="PhosphoSitePlus" id="Q9CQQ7"/>
<dbReference type="SwissPalm" id="Q9CQQ7"/>
<dbReference type="jPOST" id="Q9CQQ7"/>
<dbReference type="PaxDb" id="10090-ENSMUSP00000113022"/>
<dbReference type="PeptideAtlas" id="Q9CQQ7"/>
<dbReference type="ProteomicsDB" id="277055"/>
<dbReference type="Pumba" id="Q9CQQ7"/>
<dbReference type="TopDownProteomics" id="Q9CQQ7"/>
<dbReference type="Antibodypedia" id="33810">
    <property type="antibodies" value="191 antibodies from 32 providers"/>
</dbReference>
<dbReference type="DNASU" id="11950"/>
<dbReference type="Ensembl" id="ENSMUST00000118209.8">
    <property type="protein sequence ID" value="ENSMUSP00000113022.2"/>
    <property type="gene ID" value="ENSMUSG00000000563.18"/>
</dbReference>
<dbReference type="GeneID" id="11950"/>
<dbReference type="KEGG" id="mmu:11950"/>
<dbReference type="UCSC" id="uc008qvl.2">
    <property type="organism name" value="mouse"/>
</dbReference>
<dbReference type="AGR" id="MGI:1100495"/>
<dbReference type="CTD" id="515"/>
<dbReference type="MGI" id="MGI:1100495">
    <property type="gene designation" value="Atp5pb"/>
</dbReference>
<dbReference type="VEuPathDB" id="HostDB:ENSMUSG00000000563"/>
<dbReference type="eggNOG" id="KOG3976">
    <property type="taxonomic scope" value="Eukaryota"/>
</dbReference>
<dbReference type="GeneTree" id="ENSGT00390000001958"/>
<dbReference type="HOGENOM" id="CLU_087186_1_0_1"/>
<dbReference type="InParanoid" id="Q9CQQ7"/>
<dbReference type="OMA" id="PEEWFTF"/>
<dbReference type="OrthoDB" id="67388at2759"/>
<dbReference type="PhylomeDB" id="Q9CQQ7"/>
<dbReference type="TreeFam" id="TF313250"/>
<dbReference type="Reactome" id="R-MMU-163210">
    <property type="pathway name" value="Formation of ATP by chemiosmotic coupling"/>
</dbReference>
<dbReference type="Reactome" id="R-MMU-8949613">
    <property type="pathway name" value="Cristae formation"/>
</dbReference>
<dbReference type="BioGRID-ORCS" id="11950">
    <property type="hits" value="24 hits in 65 CRISPR screens"/>
</dbReference>
<dbReference type="CD-CODE" id="CE726F99">
    <property type="entry name" value="Postsynaptic density"/>
</dbReference>
<dbReference type="ChiTaRS" id="Atp5f1">
    <property type="organism name" value="mouse"/>
</dbReference>
<dbReference type="PRO" id="PR:Q9CQQ7"/>
<dbReference type="Proteomes" id="UP000000589">
    <property type="component" value="Chromosome 3"/>
</dbReference>
<dbReference type="RNAct" id="Q9CQQ7">
    <property type="molecule type" value="protein"/>
</dbReference>
<dbReference type="Bgee" id="ENSMUSG00000000563">
    <property type="expression patterns" value="Expressed in epithelium of small intestine and 257 other cell types or tissues"/>
</dbReference>
<dbReference type="ExpressionAtlas" id="Q9CQQ7">
    <property type="expression patterns" value="baseline and differential"/>
</dbReference>
<dbReference type="GO" id="GO:0005743">
    <property type="term" value="C:mitochondrial inner membrane"/>
    <property type="evidence" value="ECO:0007005"/>
    <property type="project" value="MGI"/>
</dbReference>
<dbReference type="GO" id="GO:0005739">
    <property type="term" value="C:mitochondrion"/>
    <property type="evidence" value="ECO:0007005"/>
    <property type="project" value="MGI"/>
</dbReference>
<dbReference type="GO" id="GO:0043209">
    <property type="term" value="C:myelin sheath"/>
    <property type="evidence" value="ECO:0007005"/>
    <property type="project" value="UniProtKB"/>
</dbReference>
<dbReference type="GO" id="GO:0045259">
    <property type="term" value="C:proton-transporting ATP synthase complex"/>
    <property type="evidence" value="ECO:0000250"/>
    <property type="project" value="UniProtKB"/>
</dbReference>
<dbReference type="GO" id="GO:0046933">
    <property type="term" value="F:proton-transporting ATP synthase activity, rotational mechanism"/>
    <property type="evidence" value="ECO:0007669"/>
    <property type="project" value="Ensembl"/>
</dbReference>
<dbReference type="GO" id="GO:0042776">
    <property type="term" value="P:proton motive force-driven mitochondrial ATP synthesis"/>
    <property type="evidence" value="ECO:0007669"/>
    <property type="project" value="Ensembl"/>
</dbReference>
<dbReference type="FunFam" id="1.20.5.2210:FF:000001">
    <property type="entry name" value="ATP synthase F(0) complex subunit B1, mitochondrial"/>
    <property type="match status" value="1"/>
</dbReference>
<dbReference type="Gene3D" id="1.20.5.2210">
    <property type="match status" value="1"/>
</dbReference>
<dbReference type="InterPro" id="IPR008688">
    <property type="entry name" value="ATP_synth_Bsub_B/MI25"/>
</dbReference>
<dbReference type="InterPro" id="IPR013837">
    <property type="entry name" value="ATP_synth_F0_suB"/>
</dbReference>
<dbReference type="PANTHER" id="PTHR12733:SF3">
    <property type="entry name" value="ATP SYNTHASE F(0) COMPLEX SUBUNIT B1, MITOCHONDRIAL"/>
    <property type="match status" value="1"/>
</dbReference>
<dbReference type="PANTHER" id="PTHR12733">
    <property type="entry name" value="MITOCHONDRIAL ATP SYNTHASE B CHAIN"/>
    <property type="match status" value="1"/>
</dbReference>
<dbReference type="Pfam" id="PF05405">
    <property type="entry name" value="Mt_ATP-synt_B"/>
    <property type="match status" value="1"/>
</dbReference>
<dbReference type="SUPFAM" id="SSF161060">
    <property type="entry name" value="ATP synthase B chain-like"/>
    <property type="match status" value="1"/>
</dbReference>
<proteinExistence type="evidence at protein level"/>